<organism>
    <name type="scientific">Listeria innocua serovar 6a (strain ATCC BAA-680 / CLIP 11262)</name>
    <dbReference type="NCBI Taxonomy" id="272626"/>
    <lineage>
        <taxon>Bacteria</taxon>
        <taxon>Bacillati</taxon>
        <taxon>Bacillota</taxon>
        <taxon>Bacilli</taxon>
        <taxon>Bacillales</taxon>
        <taxon>Listeriaceae</taxon>
        <taxon>Listeria</taxon>
    </lineage>
</organism>
<protein>
    <recommendedName>
        <fullName>CD4+ T-cell-stimulating antigen</fullName>
    </recommendedName>
</protein>
<name>TCSA_LISIN</name>
<gene>
    <name type="primary">tcsA</name>
    <name type="ordered locus">lin1425</name>
</gene>
<reference key="1">
    <citation type="journal article" date="2001" name="Science">
        <title>Comparative genomics of Listeria species.</title>
        <authorList>
            <person name="Glaser P."/>
            <person name="Frangeul L."/>
            <person name="Buchrieser C."/>
            <person name="Rusniok C."/>
            <person name="Amend A."/>
            <person name="Baquero F."/>
            <person name="Berche P."/>
            <person name="Bloecker H."/>
            <person name="Brandt P."/>
            <person name="Chakraborty T."/>
            <person name="Charbit A."/>
            <person name="Chetouani F."/>
            <person name="Couve E."/>
            <person name="de Daruvar A."/>
            <person name="Dehoux P."/>
            <person name="Domann E."/>
            <person name="Dominguez-Bernal G."/>
            <person name="Duchaud E."/>
            <person name="Durant L."/>
            <person name="Dussurget O."/>
            <person name="Entian K.-D."/>
            <person name="Fsihi H."/>
            <person name="Garcia-del Portillo F."/>
            <person name="Garrido P."/>
            <person name="Gautier L."/>
            <person name="Goebel W."/>
            <person name="Gomez-Lopez N."/>
            <person name="Hain T."/>
            <person name="Hauf J."/>
            <person name="Jackson D."/>
            <person name="Jones L.-M."/>
            <person name="Kaerst U."/>
            <person name="Kreft J."/>
            <person name="Kuhn M."/>
            <person name="Kunst F."/>
            <person name="Kurapkat G."/>
            <person name="Madueno E."/>
            <person name="Maitournam A."/>
            <person name="Mata Vicente J."/>
            <person name="Ng E."/>
            <person name="Nedjari H."/>
            <person name="Nordsiek G."/>
            <person name="Novella S."/>
            <person name="de Pablos B."/>
            <person name="Perez-Diaz J.-C."/>
            <person name="Purcell R."/>
            <person name="Remmel B."/>
            <person name="Rose M."/>
            <person name="Schlueter T."/>
            <person name="Simoes N."/>
            <person name="Tierrez A."/>
            <person name="Vazquez-Boland J.-A."/>
            <person name="Voss H."/>
            <person name="Wehland J."/>
            <person name="Cossart P."/>
        </authorList>
    </citation>
    <scope>NUCLEOTIDE SEQUENCE [LARGE SCALE GENOMIC DNA]</scope>
    <source>
        <strain>ATCC BAA-680 / CLIP 11262</strain>
    </source>
</reference>
<accession>Q92BW7</accession>
<evidence type="ECO:0000305" key="1"/>
<sequence length="357" mass="38357">MKKRTFALALSMIIASGVVLGACGSSSDDKKSGDDKSSKDFTVAMVTDTGGVDDRSFNQSAWEGLQKFGKANDMEKGTDGYNYLQSASEADYKTNLNTAVRSDYDLIYGIGYKLKDAIEEVSKQKPKNQFAIVDDTIDDRDNVVSIGFKDNDGSYLVGVVAGLTTKTNKVGFVGGVKGAVIDRFEAGFTAGVKAVNPNAQIDVQYANDFAKADKGQQIASSMYSSGVDVIFHAAGGTGNGVFAEAKNLKKKDPSRAVWVIGVDRDQWDEGKVTANDGKDYNVTLTSEIKRVDIAVDDLATRTKAGDFPGGTKIEYGLDKDAVGLSEHQDNISKDVLAKVEEYKQKIVDGDIKVPEKP</sequence>
<dbReference type="EMBL" id="AL596168">
    <property type="protein sequence ID" value="CAC96656.1"/>
    <property type="molecule type" value="Genomic_DNA"/>
</dbReference>
<dbReference type="PIR" id="AH1610">
    <property type="entry name" value="AH1610"/>
</dbReference>
<dbReference type="RefSeq" id="WP_003766833.1">
    <property type="nucleotide sequence ID" value="NC_003212.1"/>
</dbReference>
<dbReference type="SMR" id="Q92BW7"/>
<dbReference type="STRING" id="272626.gene:17565756"/>
<dbReference type="KEGG" id="lin:tcsA"/>
<dbReference type="eggNOG" id="COG1744">
    <property type="taxonomic scope" value="Bacteria"/>
</dbReference>
<dbReference type="HOGENOM" id="CLU_038813_0_0_9"/>
<dbReference type="OrthoDB" id="9784230at2"/>
<dbReference type="Proteomes" id="UP000002513">
    <property type="component" value="Chromosome"/>
</dbReference>
<dbReference type="GO" id="GO:0005886">
    <property type="term" value="C:plasma membrane"/>
    <property type="evidence" value="ECO:0007669"/>
    <property type="project" value="UniProtKB-SubCell"/>
</dbReference>
<dbReference type="CDD" id="cd06354">
    <property type="entry name" value="PBP1_PrnA-like"/>
    <property type="match status" value="1"/>
</dbReference>
<dbReference type="Gene3D" id="3.40.50.2300">
    <property type="match status" value="2"/>
</dbReference>
<dbReference type="InterPro" id="IPR050957">
    <property type="entry name" value="BMP_lipoprotein"/>
</dbReference>
<dbReference type="InterPro" id="IPR028082">
    <property type="entry name" value="Peripla_BP_I"/>
</dbReference>
<dbReference type="InterPro" id="IPR003760">
    <property type="entry name" value="PnrA-like"/>
</dbReference>
<dbReference type="PANTHER" id="PTHR34296:SF2">
    <property type="entry name" value="ABC TRANSPORTER GUANOSINE-BINDING PROTEIN NUPN"/>
    <property type="match status" value="1"/>
</dbReference>
<dbReference type="PANTHER" id="PTHR34296">
    <property type="entry name" value="TRANSCRIPTIONAL ACTIVATOR PROTEIN MED"/>
    <property type="match status" value="1"/>
</dbReference>
<dbReference type="Pfam" id="PF02608">
    <property type="entry name" value="Bmp"/>
    <property type="match status" value="1"/>
</dbReference>
<dbReference type="SUPFAM" id="SSF53822">
    <property type="entry name" value="Periplasmic binding protein-like I"/>
    <property type="match status" value="1"/>
</dbReference>
<dbReference type="PROSITE" id="PS51257">
    <property type="entry name" value="PROKAR_LIPOPROTEIN"/>
    <property type="match status" value="1"/>
</dbReference>
<proteinExistence type="inferred from homology"/>
<comment type="subcellular location">
    <subcellularLocation>
        <location evidence="1">Cell membrane</location>
        <topology evidence="1">Lipid-anchor</topology>
    </subcellularLocation>
</comment>
<comment type="similarity">
    <text evidence="1">Belongs to the BMP lipoprotein family.</text>
</comment>
<keyword id="KW-1003">Cell membrane</keyword>
<keyword id="KW-0449">Lipoprotein</keyword>
<keyword id="KW-0472">Membrane</keyword>
<keyword id="KW-0564">Palmitate</keyword>
<keyword id="KW-0732">Signal</keyword>
<feature type="signal peptide" evidence="1">
    <location>
        <begin position="1"/>
        <end position="22"/>
    </location>
</feature>
<feature type="chain" id="PRO_0000018005" description="CD4+ T-cell-stimulating antigen">
    <location>
        <begin position="23"/>
        <end position="357"/>
    </location>
</feature>
<feature type="lipid moiety-binding region" description="N-palmitoyl cysteine" evidence="1">
    <location>
        <position position="23"/>
    </location>
</feature>
<feature type="lipid moiety-binding region" description="S-diacylglycerol cysteine" evidence="1">
    <location>
        <position position="23"/>
    </location>
</feature>